<keyword id="KW-0002">3D-structure</keyword>
<keyword id="KW-0963">Cytoplasm</keyword>
<keyword id="KW-0217">Developmental protein</keyword>
<keyword id="KW-0221">Differentiation</keyword>
<keyword id="KW-0287">Flowering</keyword>
<keyword id="KW-1185">Reference proteome</keyword>
<comment type="function">
    <text evidence="1">Controls inflorescence meristem identity and is required for maintenance of an indeterminate inflorescence. Prevents the expression of 'APETALA1' and 'LEAFY'. Also plays a role in the regulation of the time of flowering in the long-day flowering pathway. May form complexes with phosphorylated ligands by interfering with kinases and their effectors (By similarity).</text>
</comment>
<comment type="subcellular location">
    <subcellularLocation>
        <location evidence="1">Cytoplasm</location>
    </subcellularLocation>
</comment>
<comment type="tissue specificity">
    <text>Expressed below the apical dome of inflorescence and coflorescence meristems, and in inflorescence stem.</text>
</comment>
<comment type="developmental stage">
    <text>Weakly expressed in vegetative phase from day 2 or day 3. Increased expression after commitment to flowering from day 7 on.</text>
</comment>
<comment type="miscellaneous">
    <text>Mutagenesis of His-88 to Tyr converts the repressor of flowering 'TERMINAL FLOWER 1' into a 'FLOWERING LOCUS T'-like activator of flowering.</text>
</comment>
<comment type="similarity">
    <text evidence="3">Belongs to the phosphatidylethanolamine-binding protein family.</text>
</comment>
<feature type="chain" id="PRO_0000204761" description="Protein TERMINAL FLOWER 1">
    <location>
        <begin position="1"/>
        <end position="177"/>
    </location>
</feature>
<feature type="mutagenesis site" description="In tfl1-14; early-flowering and terminal inflorescence.">
    <original>T</original>
    <variation>I</variation>
    <location>
        <position position="69"/>
    </location>
</feature>
<feature type="mutagenesis site" description="In tfl1-13; early-flowering and terminal inflorescence.">
    <original>E</original>
    <variation>K</variation>
    <location>
        <position position="87"/>
    </location>
</feature>
<feature type="mutagenesis site" description="Early-flowering and terminal inflorescence." evidence="2">
    <original>H</original>
    <variation>Y</variation>
    <location>
        <position position="88"/>
    </location>
</feature>
<feature type="mutagenesis site" description="In tfl1-11; early-flowering and terminal inflorescence.">
    <original>G</original>
    <variation>S</variation>
    <location>
        <position position="98"/>
    </location>
</feature>
<feature type="mutagenesis site" description="In tfl1-1; early-flowering and terminal inflorescence.">
    <original>G</original>
    <variation>D</variation>
    <location>
        <position position="105"/>
    </location>
</feature>
<feature type="mutagenesis site" description="No effect on terminal flower formation." evidence="2">
    <original>L</original>
    <variation>N</variation>
    <location>
        <position position="113"/>
    </location>
</feature>
<feature type="mutagenesis site" description="Early-flowering and terminal inflorescence." evidence="2">
    <original>F</original>
    <variation>V</variation>
    <location>
        <position position="123"/>
    </location>
</feature>
<feature type="helix" evidence="4">
    <location>
        <begin position="10"/>
        <end position="14"/>
    </location>
</feature>
<feature type="helix" evidence="4">
    <location>
        <begin position="17"/>
        <end position="20"/>
    </location>
</feature>
<feature type="strand" evidence="4">
    <location>
        <begin position="29"/>
        <end position="35"/>
    </location>
</feature>
<feature type="helix" evidence="4">
    <location>
        <begin position="48"/>
        <end position="51"/>
    </location>
</feature>
<feature type="strand" evidence="4">
    <location>
        <begin position="56"/>
        <end position="62"/>
    </location>
</feature>
<feature type="strand" evidence="4">
    <location>
        <begin position="67"/>
        <end position="74"/>
    </location>
</feature>
<feature type="strand" evidence="4">
    <location>
        <begin position="88"/>
        <end position="97"/>
    </location>
</feature>
<feature type="helix" evidence="4">
    <location>
        <begin position="102"/>
        <end position="104"/>
    </location>
</feature>
<feature type="strand" evidence="4">
    <location>
        <begin position="105"/>
        <end position="109"/>
    </location>
</feature>
<feature type="strand" evidence="4">
    <location>
        <begin position="121"/>
        <end position="129"/>
    </location>
</feature>
<feature type="helix" evidence="4">
    <location>
        <begin position="148"/>
        <end position="154"/>
    </location>
</feature>
<feature type="strand" evidence="4">
    <location>
        <begin position="161"/>
        <end position="168"/>
    </location>
</feature>
<organism>
    <name type="scientific">Arabidopsis thaliana</name>
    <name type="common">Mouse-ear cress</name>
    <dbReference type="NCBI Taxonomy" id="3702"/>
    <lineage>
        <taxon>Eukaryota</taxon>
        <taxon>Viridiplantae</taxon>
        <taxon>Streptophyta</taxon>
        <taxon>Embryophyta</taxon>
        <taxon>Tracheophyta</taxon>
        <taxon>Spermatophyta</taxon>
        <taxon>Magnoliopsida</taxon>
        <taxon>eudicotyledons</taxon>
        <taxon>Gunneridae</taxon>
        <taxon>Pentapetalae</taxon>
        <taxon>rosids</taxon>
        <taxon>malvids</taxon>
        <taxon>Brassicales</taxon>
        <taxon>Brassicaceae</taxon>
        <taxon>Camelineae</taxon>
        <taxon>Arabidopsis</taxon>
    </lineage>
</organism>
<proteinExistence type="evidence at protein level"/>
<gene>
    <name type="primary">TFL1</name>
    <name type="ordered locus">At5g03840</name>
    <name type="ORF">F8F6_50</name>
</gene>
<evidence type="ECO:0000250" key="1"/>
<evidence type="ECO:0000269" key="2">
    <source>
    </source>
</evidence>
<evidence type="ECO:0000305" key="3"/>
<evidence type="ECO:0007829" key="4">
    <source>
        <dbReference type="PDB" id="1WKO"/>
    </source>
</evidence>
<name>TFL1_ARATH</name>
<reference key="1">
    <citation type="journal article" date="1997" name="Science">
        <title>Inflorescence commitment and architecture in Arabidopsis.</title>
        <authorList>
            <person name="Bradley D."/>
            <person name="Ratcliffe O."/>
            <person name="Vincent C."/>
            <person name="Carpenter R."/>
            <person name="Coen E.S."/>
        </authorList>
    </citation>
    <scope>NUCLEOTIDE SEQUENCE [MRNA]</scope>
    <scope>MUTANTS TLF1-1; TFL1-11; TFL1-13 AND TFL1-14</scope>
    <source>
        <strain>cv. Columbia</strain>
    </source>
</reference>
<reference key="2">
    <citation type="journal article" date="1997" name="Mol. Gen. Genet.">
        <title>Cloning and molecular analysis of the Arabidopsis gene Terminal Flower 1.</title>
        <authorList>
            <person name="Ohshima S."/>
            <person name="Murata M."/>
            <person name="Sakamoto W."/>
            <person name="Ogura Y."/>
            <person name="Motoyoshi F."/>
        </authorList>
    </citation>
    <scope>NUCLEOTIDE SEQUENCE [GENOMIC DNA]</scope>
    <scope>MUTANTS TLF1-1; TFL1-11; TFL1-13 AND TFL1-14</scope>
    <source>
        <strain>cv. Columbia</strain>
        <strain>cv. Wassilewskija</strain>
    </source>
</reference>
<reference key="3">
    <citation type="journal article" date="1997" name="DNA Res.">
        <title>Structural analysis of Arabidopsis thaliana chromosome 5. I. Sequence features of the 1.6 Mb regions covered by twenty physically assigned P1 clones.</title>
        <authorList>
            <person name="Sato S."/>
            <person name="Kotani H."/>
            <person name="Nakamura Y."/>
            <person name="Kaneko T."/>
            <person name="Asamizu E."/>
            <person name="Fukami M."/>
            <person name="Miyajima N."/>
            <person name="Tabata S."/>
        </authorList>
    </citation>
    <scope>NUCLEOTIDE SEQUENCE [LARGE SCALE GENOMIC DNA]</scope>
    <source>
        <strain>cv. Columbia</strain>
    </source>
</reference>
<reference key="4">
    <citation type="journal article" date="2000" name="Nature">
        <title>Sequence and analysis of chromosome 5 of the plant Arabidopsis thaliana.</title>
        <authorList>
            <person name="Tabata S."/>
            <person name="Kaneko T."/>
            <person name="Nakamura Y."/>
            <person name="Kotani H."/>
            <person name="Kato T."/>
            <person name="Asamizu E."/>
            <person name="Miyajima N."/>
            <person name="Sasamoto S."/>
            <person name="Kimura T."/>
            <person name="Hosouchi T."/>
            <person name="Kawashima K."/>
            <person name="Kohara M."/>
            <person name="Matsumoto M."/>
            <person name="Matsuno A."/>
            <person name="Muraki A."/>
            <person name="Nakayama S."/>
            <person name="Nakazaki N."/>
            <person name="Naruo K."/>
            <person name="Okumura S."/>
            <person name="Shinpo S."/>
            <person name="Takeuchi C."/>
            <person name="Wada T."/>
            <person name="Watanabe A."/>
            <person name="Yamada M."/>
            <person name="Yasuda M."/>
            <person name="Sato S."/>
            <person name="de la Bastide M."/>
            <person name="Huang E."/>
            <person name="Spiegel L."/>
            <person name="Gnoj L."/>
            <person name="O'Shaughnessy A."/>
            <person name="Preston R."/>
            <person name="Habermann K."/>
            <person name="Murray J."/>
            <person name="Johnson D."/>
            <person name="Rohlfing T."/>
            <person name="Nelson J."/>
            <person name="Stoneking T."/>
            <person name="Pepin K."/>
            <person name="Spieth J."/>
            <person name="Sekhon M."/>
            <person name="Armstrong J."/>
            <person name="Becker M."/>
            <person name="Belter E."/>
            <person name="Cordum H."/>
            <person name="Cordes M."/>
            <person name="Courtney L."/>
            <person name="Courtney W."/>
            <person name="Dante M."/>
            <person name="Du H."/>
            <person name="Edwards J."/>
            <person name="Fryman J."/>
            <person name="Haakensen B."/>
            <person name="Lamar E."/>
            <person name="Latreille P."/>
            <person name="Leonard S."/>
            <person name="Meyer R."/>
            <person name="Mulvaney E."/>
            <person name="Ozersky P."/>
            <person name="Riley A."/>
            <person name="Strowmatt C."/>
            <person name="Wagner-McPherson C."/>
            <person name="Wollam A."/>
            <person name="Yoakum M."/>
            <person name="Bell M."/>
            <person name="Dedhia N."/>
            <person name="Parnell L."/>
            <person name="Shah R."/>
            <person name="Rodriguez M."/>
            <person name="Hoon See L."/>
            <person name="Vil D."/>
            <person name="Baker J."/>
            <person name="Kirchoff K."/>
            <person name="Toth K."/>
            <person name="King L."/>
            <person name="Bahret A."/>
            <person name="Miller B."/>
            <person name="Marra M.A."/>
            <person name="Martienssen R."/>
            <person name="McCombie W.R."/>
            <person name="Wilson R.K."/>
            <person name="Murphy G."/>
            <person name="Bancroft I."/>
            <person name="Volckaert G."/>
            <person name="Wambutt R."/>
            <person name="Duesterhoeft A."/>
            <person name="Stiekema W."/>
            <person name="Pohl T."/>
            <person name="Entian K.-D."/>
            <person name="Terryn N."/>
            <person name="Hartley N."/>
            <person name="Bent E."/>
            <person name="Johnson S."/>
            <person name="Langham S.-A."/>
            <person name="McCullagh B."/>
            <person name="Robben J."/>
            <person name="Grymonprez B."/>
            <person name="Zimmermann W."/>
            <person name="Ramsperger U."/>
            <person name="Wedler H."/>
            <person name="Balke K."/>
            <person name="Wedler E."/>
            <person name="Peters S."/>
            <person name="van Staveren M."/>
            <person name="Dirkse W."/>
            <person name="Mooijman P."/>
            <person name="Klein Lankhorst R."/>
            <person name="Weitzenegger T."/>
            <person name="Bothe G."/>
            <person name="Rose M."/>
            <person name="Hauf J."/>
            <person name="Berneiser S."/>
            <person name="Hempel S."/>
            <person name="Feldpausch M."/>
            <person name="Lamberth S."/>
            <person name="Villarroel R."/>
            <person name="Gielen J."/>
            <person name="Ardiles W."/>
            <person name="Bents O."/>
            <person name="Lemcke K."/>
            <person name="Kolesov G."/>
            <person name="Mayer K.F.X."/>
            <person name="Rudd S."/>
            <person name="Schoof H."/>
            <person name="Schueller C."/>
            <person name="Zaccaria P."/>
            <person name="Mewes H.-W."/>
            <person name="Bevan M."/>
            <person name="Fransz P.F."/>
        </authorList>
    </citation>
    <scope>NUCLEOTIDE SEQUENCE [LARGE SCALE GENOMIC DNA]</scope>
    <source>
        <strain>cv. Columbia</strain>
    </source>
</reference>
<reference key="5">
    <citation type="journal article" date="2017" name="Plant J.">
        <title>Araport11: a complete reannotation of the Arabidopsis thaliana reference genome.</title>
        <authorList>
            <person name="Cheng C.Y."/>
            <person name="Krishnakumar V."/>
            <person name="Chan A.P."/>
            <person name="Thibaud-Nissen F."/>
            <person name="Schobel S."/>
            <person name="Town C.D."/>
        </authorList>
    </citation>
    <scope>GENOME REANNOTATION</scope>
    <source>
        <strain>cv. Columbia</strain>
    </source>
</reference>
<reference key="6">
    <citation type="journal article" date="2005" name="Proc. Natl. Acad. Sci. U.S.A.">
        <title>A single amino acid converts a repressor to an activator of flowering.</title>
        <authorList>
            <person name="Hanzawa Y."/>
            <person name="Money T."/>
            <person name="Bradley D."/>
        </authorList>
    </citation>
    <scope>MUTAGENESIS OF HIS-88; LEU-113 AND PHE-123</scope>
</reference>
<protein>
    <recommendedName>
        <fullName>Protein TERMINAL FLOWER 1</fullName>
    </recommendedName>
</protein>
<sequence>MENMGTRVIEPLIMGRVVGDVLDFFTPTTKMNVSYNKKQVSNGHELFPSSVSSKPRVEIHGGDLRSFFTLVMIDPDVPGPSDPFLKEHLHWIVTNIPGTTDATFGKEVVSYELPRPSIGIHRFVFVLFRQKQRRVIFPNIPSRDHFNTRKFAVEYDLGLPVAAVFFNAQRETAARKR</sequence>
<accession>P93003</accession>
<accession>O04756</accession>
<accession>O04757</accession>
<accession>O04758</accession>
<dbReference type="EMBL" id="U77674">
    <property type="protein sequence ID" value="AAB41624.1"/>
    <property type="molecule type" value="mRNA"/>
</dbReference>
<dbReference type="EMBL" id="D86932">
    <property type="protein sequence ID" value="BAA20483.1"/>
    <property type="molecule type" value="Genomic_DNA"/>
</dbReference>
<dbReference type="EMBL" id="D87130">
    <property type="protein sequence ID" value="BAA20484.1"/>
    <property type="molecule type" value="Genomic_DNA"/>
</dbReference>
<dbReference type="EMBL" id="D87519">
    <property type="protein sequence ID" value="BAA20485.1"/>
    <property type="molecule type" value="Genomic_DNA"/>
</dbReference>
<dbReference type="EMBL" id="AB005235">
    <property type="protein sequence ID" value="BAB08610.1"/>
    <property type="molecule type" value="Genomic_DNA"/>
</dbReference>
<dbReference type="EMBL" id="AL162873">
    <property type="protein sequence ID" value="CAB85504.1"/>
    <property type="molecule type" value="Genomic_DNA"/>
</dbReference>
<dbReference type="EMBL" id="CP002688">
    <property type="protein sequence ID" value="AED90661.1"/>
    <property type="molecule type" value="Genomic_DNA"/>
</dbReference>
<dbReference type="PIR" id="T48411">
    <property type="entry name" value="T48411"/>
</dbReference>
<dbReference type="RefSeq" id="NP_196004.1">
    <property type="nucleotide sequence ID" value="NM_120465.3"/>
</dbReference>
<dbReference type="PDB" id="1WKO">
    <property type="method" value="X-ray"/>
    <property type="resolution" value="1.80 A"/>
    <property type="chains" value="A/B=1-177"/>
</dbReference>
<dbReference type="PDBsum" id="1WKO"/>
<dbReference type="SMR" id="P93003"/>
<dbReference type="BioGRID" id="16959">
    <property type="interactions" value="2"/>
</dbReference>
<dbReference type="FunCoup" id="P93003">
    <property type="interactions" value="872"/>
</dbReference>
<dbReference type="IntAct" id="P93003">
    <property type="interactions" value="2"/>
</dbReference>
<dbReference type="STRING" id="3702.P93003"/>
<dbReference type="PaxDb" id="3702-AT5G03840.1"/>
<dbReference type="ProteomicsDB" id="234214"/>
<dbReference type="EnsemblPlants" id="AT5G03840.1">
    <property type="protein sequence ID" value="AT5G03840.1"/>
    <property type="gene ID" value="AT5G03840"/>
</dbReference>
<dbReference type="GeneID" id="831683"/>
<dbReference type="Gramene" id="AT5G03840.1">
    <property type="protein sequence ID" value="AT5G03840.1"/>
    <property type="gene ID" value="AT5G03840"/>
</dbReference>
<dbReference type="KEGG" id="ath:AT5G03840"/>
<dbReference type="Araport" id="AT5G03840"/>
<dbReference type="TAIR" id="AT5G03840">
    <property type="gene designation" value="TFL1"/>
</dbReference>
<dbReference type="eggNOG" id="KOG3346">
    <property type="taxonomic scope" value="Eukaryota"/>
</dbReference>
<dbReference type="HOGENOM" id="CLU_043994_6_1_1"/>
<dbReference type="InParanoid" id="P93003"/>
<dbReference type="OMA" id="VILMWEH"/>
<dbReference type="OrthoDB" id="2506647at2759"/>
<dbReference type="PhylomeDB" id="P93003"/>
<dbReference type="EvolutionaryTrace" id="P93003"/>
<dbReference type="PRO" id="PR:P93003"/>
<dbReference type="Proteomes" id="UP000006548">
    <property type="component" value="Chromosome 5"/>
</dbReference>
<dbReference type="ExpressionAtlas" id="P93003">
    <property type="expression patterns" value="baseline and differential"/>
</dbReference>
<dbReference type="GO" id="GO:0005737">
    <property type="term" value="C:cytoplasm"/>
    <property type="evidence" value="ECO:0000314"/>
    <property type="project" value="TAIR"/>
</dbReference>
<dbReference type="GO" id="GO:0005634">
    <property type="term" value="C:nucleus"/>
    <property type="evidence" value="ECO:0000314"/>
    <property type="project" value="TAIR"/>
</dbReference>
<dbReference type="GO" id="GO:0005886">
    <property type="term" value="C:plasma membrane"/>
    <property type="evidence" value="ECO:0000314"/>
    <property type="project" value="TAIR"/>
</dbReference>
<dbReference type="GO" id="GO:0005773">
    <property type="term" value="C:vacuole"/>
    <property type="evidence" value="ECO:0000314"/>
    <property type="project" value="TAIR"/>
</dbReference>
<dbReference type="GO" id="GO:0031982">
    <property type="term" value="C:vesicle"/>
    <property type="evidence" value="ECO:0000314"/>
    <property type="project" value="TAIR"/>
</dbReference>
<dbReference type="GO" id="GO:0003712">
    <property type="term" value="F:transcription coregulator activity"/>
    <property type="evidence" value="ECO:0000315"/>
    <property type="project" value="TAIR"/>
</dbReference>
<dbReference type="GO" id="GO:0030154">
    <property type="term" value="P:cell differentiation"/>
    <property type="evidence" value="ECO:0007669"/>
    <property type="project" value="UniProtKB-KW"/>
</dbReference>
<dbReference type="GO" id="GO:0009908">
    <property type="term" value="P:flower development"/>
    <property type="evidence" value="ECO:0007669"/>
    <property type="project" value="UniProtKB-KW"/>
</dbReference>
<dbReference type="GO" id="GO:0010022">
    <property type="term" value="P:meristem determinacy"/>
    <property type="evidence" value="ECO:0000316"/>
    <property type="project" value="TAIR"/>
</dbReference>
<dbReference type="GO" id="GO:0009910">
    <property type="term" value="P:negative regulation of flower development"/>
    <property type="evidence" value="ECO:0000315"/>
    <property type="project" value="TAIR"/>
</dbReference>
<dbReference type="GO" id="GO:0006623">
    <property type="term" value="P:protein targeting to vacuole"/>
    <property type="evidence" value="ECO:0000315"/>
    <property type="project" value="TAIR"/>
</dbReference>
<dbReference type="GO" id="GO:0009744">
    <property type="term" value="P:response to sucrose"/>
    <property type="evidence" value="ECO:0000315"/>
    <property type="project" value="TAIR"/>
</dbReference>
<dbReference type="CDD" id="cd00866">
    <property type="entry name" value="PEBP_euk"/>
    <property type="match status" value="1"/>
</dbReference>
<dbReference type="FunFam" id="3.90.280.10:FF:000001">
    <property type="entry name" value="Terminal flower 1"/>
    <property type="match status" value="1"/>
</dbReference>
<dbReference type="Gene3D" id="3.90.280.10">
    <property type="entry name" value="PEBP-like"/>
    <property type="match status" value="1"/>
</dbReference>
<dbReference type="InterPro" id="IPR008914">
    <property type="entry name" value="PEBP"/>
</dbReference>
<dbReference type="InterPro" id="IPR036610">
    <property type="entry name" value="PEBP-like_sf"/>
</dbReference>
<dbReference type="InterPro" id="IPR035810">
    <property type="entry name" value="PEBP_euk"/>
</dbReference>
<dbReference type="InterPro" id="IPR001858">
    <property type="entry name" value="Phosphatidylethanolamine-bd_CS"/>
</dbReference>
<dbReference type="PANTHER" id="PTHR11362">
    <property type="entry name" value="PHOSPHATIDYLETHANOLAMINE-BINDING PROTEIN"/>
    <property type="match status" value="1"/>
</dbReference>
<dbReference type="PANTHER" id="PTHR11362:SF13">
    <property type="entry name" value="PROTEIN TERMINAL FLOWER 1"/>
    <property type="match status" value="1"/>
</dbReference>
<dbReference type="Pfam" id="PF01161">
    <property type="entry name" value="PBP"/>
    <property type="match status" value="1"/>
</dbReference>
<dbReference type="SUPFAM" id="SSF49777">
    <property type="entry name" value="PEBP-like"/>
    <property type="match status" value="1"/>
</dbReference>
<dbReference type="PROSITE" id="PS01220">
    <property type="entry name" value="PBP"/>
    <property type="match status" value="1"/>
</dbReference>